<sequence length="491" mass="53598">MNTQQLAKLRSIVPEMRRVRHIHFVGIGGAGMGGIAEVLANEGYQISGSDLAPNPVTQQLMNLGATIYFNHRPENVRDASVVVVSSAISADNPEIVAAHEARIPVIRRAEMLAELMRFRHGIAIAGTHGKTTTTAMVSSIYAEAGLDPTFVNGGLVKAAGVHARLGHGRYLIAEADESDASFLHLQPMVAIVTNIEADHMDTYQGDFENLKQTFINFLHNLPFYGRAVMCVDDPVIRELLPRVGRQTTTYGFSEDADVRVEDYQQIGPQGHFTLLRQDKEPMRVTLNAPGRHNALNAAAAVAVATEEGIDDEAILRALESFQGTGRRFDFLGEFPLEPVNGKSGTAMLVDDYGHHPTEVDATIKAARAGWPDKNLVMLFQPHRFTRTRDLYDDFANVLTQVDTLLMLEVYPAGEAPIPGADSRSLCRTIRGRGKIDPILVPDPAQVAEMLAPVLTGNDLILVQGAGNIGKIARSLAEIKLKPQTPEEEQHD</sequence>
<name>MURC_ECO57</name>
<accession>P65471</accession>
<accession>Q8X9Y7</accession>
<protein>
    <recommendedName>
        <fullName evidence="1">UDP-N-acetylmuramate--L-alanine ligase</fullName>
        <ecNumber evidence="1">6.3.2.8</ecNumber>
    </recommendedName>
    <alternativeName>
        <fullName evidence="1">UDP-N-acetylmuramoyl-L-alanine synthetase</fullName>
    </alternativeName>
</protein>
<gene>
    <name evidence="1" type="primary">murC</name>
    <name type="ordered locus">Z0101</name>
    <name type="ordered locus">ECs0095</name>
</gene>
<keyword id="KW-0067">ATP-binding</keyword>
<keyword id="KW-0131">Cell cycle</keyword>
<keyword id="KW-0132">Cell division</keyword>
<keyword id="KW-0133">Cell shape</keyword>
<keyword id="KW-0961">Cell wall biogenesis/degradation</keyword>
<keyword id="KW-0963">Cytoplasm</keyword>
<keyword id="KW-0436">Ligase</keyword>
<keyword id="KW-0547">Nucleotide-binding</keyword>
<keyword id="KW-0573">Peptidoglycan synthesis</keyword>
<keyword id="KW-1185">Reference proteome</keyword>
<comment type="function">
    <text evidence="1">Cell wall formation.</text>
</comment>
<comment type="catalytic activity">
    <reaction evidence="1">
        <text>UDP-N-acetyl-alpha-D-muramate + L-alanine + ATP = UDP-N-acetyl-alpha-D-muramoyl-L-alanine + ADP + phosphate + H(+)</text>
        <dbReference type="Rhea" id="RHEA:23372"/>
        <dbReference type="ChEBI" id="CHEBI:15378"/>
        <dbReference type="ChEBI" id="CHEBI:30616"/>
        <dbReference type="ChEBI" id="CHEBI:43474"/>
        <dbReference type="ChEBI" id="CHEBI:57972"/>
        <dbReference type="ChEBI" id="CHEBI:70757"/>
        <dbReference type="ChEBI" id="CHEBI:83898"/>
        <dbReference type="ChEBI" id="CHEBI:456216"/>
        <dbReference type="EC" id="6.3.2.8"/>
    </reaction>
</comment>
<comment type="pathway">
    <text evidence="1">Cell wall biogenesis; peptidoglycan biosynthesis.</text>
</comment>
<comment type="subcellular location">
    <subcellularLocation>
        <location evidence="1">Cytoplasm</location>
    </subcellularLocation>
</comment>
<comment type="similarity">
    <text evidence="1">Belongs to the MurCDEF family.</text>
</comment>
<feature type="chain" id="PRO_0000182091" description="UDP-N-acetylmuramate--L-alanine ligase">
    <location>
        <begin position="1"/>
        <end position="491"/>
    </location>
</feature>
<feature type="binding site" evidence="1">
    <location>
        <begin position="126"/>
        <end position="132"/>
    </location>
    <ligand>
        <name>ATP</name>
        <dbReference type="ChEBI" id="CHEBI:30616"/>
    </ligand>
</feature>
<organism>
    <name type="scientific">Escherichia coli O157:H7</name>
    <dbReference type="NCBI Taxonomy" id="83334"/>
    <lineage>
        <taxon>Bacteria</taxon>
        <taxon>Pseudomonadati</taxon>
        <taxon>Pseudomonadota</taxon>
        <taxon>Gammaproteobacteria</taxon>
        <taxon>Enterobacterales</taxon>
        <taxon>Enterobacteriaceae</taxon>
        <taxon>Escherichia</taxon>
    </lineage>
</organism>
<proteinExistence type="inferred from homology"/>
<evidence type="ECO:0000255" key="1">
    <source>
        <dbReference type="HAMAP-Rule" id="MF_00046"/>
    </source>
</evidence>
<reference key="1">
    <citation type="journal article" date="2001" name="Nature">
        <title>Genome sequence of enterohaemorrhagic Escherichia coli O157:H7.</title>
        <authorList>
            <person name="Perna N.T."/>
            <person name="Plunkett G. III"/>
            <person name="Burland V."/>
            <person name="Mau B."/>
            <person name="Glasner J.D."/>
            <person name="Rose D.J."/>
            <person name="Mayhew G.F."/>
            <person name="Evans P.S."/>
            <person name="Gregor J."/>
            <person name="Kirkpatrick H.A."/>
            <person name="Posfai G."/>
            <person name="Hackett J."/>
            <person name="Klink S."/>
            <person name="Boutin A."/>
            <person name="Shao Y."/>
            <person name="Miller L."/>
            <person name="Grotbeck E.J."/>
            <person name="Davis N.W."/>
            <person name="Lim A."/>
            <person name="Dimalanta E.T."/>
            <person name="Potamousis K."/>
            <person name="Apodaca J."/>
            <person name="Anantharaman T.S."/>
            <person name="Lin J."/>
            <person name="Yen G."/>
            <person name="Schwartz D.C."/>
            <person name="Welch R.A."/>
            <person name="Blattner F.R."/>
        </authorList>
    </citation>
    <scope>NUCLEOTIDE SEQUENCE [LARGE SCALE GENOMIC DNA]</scope>
    <source>
        <strain>O157:H7 / EDL933 / ATCC 700927 / EHEC</strain>
    </source>
</reference>
<reference key="2">
    <citation type="journal article" date="2001" name="DNA Res.">
        <title>Complete genome sequence of enterohemorrhagic Escherichia coli O157:H7 and genomic comparison with a laboratory strain K-12.</title>
        <authorList>
            <person name="Hayashi T."/>
            <person name="Makino K."/>
            <person name="Ohnishi M."/>
            <person name="Kurokawa K."/>
            <person name="Ishii K."/>
            <person name="Yokoyama K."/>
            <person name="Han C.-G."/>
            <person name="Ohtsubo E."/>
            <person name="Nakayama K."/>
            <person name="Murata T."/>
            <person name="Tanaka M."/>
            <person name="Tobe T."/>
            <person name="Iida T."/>
            <person name="Takami H."/>
            <person name="Honda T."/>
            <person name="Sasakawa C."/>
            <person name="Ogasawara N."/>
            <person name="Yasunaga T."/>
            <person name="Kuhara S."/>
            <person name="Shiba T."/>
            <person name="Hattori M."/>
            <person name="Shinagawa H."/>
        </authorList>
    </citation>
    <scope>NUCLEOTIDE SEQUENCE [LARGE SCALE GENOMIC DNA]</scope>
    <source>
        <strain>O157:H7 / Sakai / RIMD 0509952 / EHEC</strain>
    </source>
</reference>
<dbReference type="EC" id="6.3.2.8" evidence="1"/>
<dbReference type="EMBL" id="AE005174">
    <property type="protein sequence ID" value="AAG54395.1"/>
    <property type="molecule type" value="Genomic_DNA"/>
</dbReference>
<dbReference type="EMBL" id="BA000007">
    <property type="protein sequence ID" value="BAB33518.1"/>
    <property type="molecule type" value="Genomic_DNA"/>
</dbReference>
<dbReference type="PIR" id="G85491">
    <property type="entry name" value="G85491"/>
</dbReference>
<dbReference type="PIR" id="G90640">
    <property type="entry name" value="G90640"/>
</dbReference>
<dbReference type="RefSeq" id="NP_308122.1">
    <property type="nucleotide sequence ID" value="NC_002695.1"/>
</dbReference>
<dbReference type="RefSeq" id="WP_001096048.1">
    <property type="nucleotide sequence ID" value="NZ_VOAI01000002.1"/>
</dbReference>
<dbReference type="SMR" id="P65471"/>
<dbReference type="STRING" id="155864.Z0101"/>
<dbReference type="GeneID" id="75169991"/>
<dbReference type="GeneID" id="913555"/>
<dbReference type="KEGG" id="ece:Z0101"/>
<dbReference type="KEGG" id="ecs:ECs_0095"/>
<dbReference type="PATRIC" id="fig|386585.9.peg.195"/>
<dbReference type="eggNOG" id="COG0773">
    <property type="taxonomic scope" value="Bacteria"/>
</dbReference>
<dbReference type="HOGENOM" id="CLU_028104_2_2_6"/>
<dbReference type="OMA" id="DITYQLR"/>
<dbReference type="UniPathway" id="UPA00219"/>
<dbReference type="Proteomes" id="UP000000558">
    <property type="component" value="Chromosome"/>
</dbReference>
<dbReference type="Proteomes" id="UP000002519">
    <property type="component" value="Chromosome"/>
</dbReference>
<dbReference type="GO" id="GO:0005737">
    <property type="term" value="C:cytoplasm"/>
    <property type="evidence" value="ECO:0007669"/>
    <property type="project" value="UniProtKB-SubCell"/>
</dbReference>
<dbReference type="GO" id="GO:0005524">
    <property type="term" value="F:ATP binding"/>
    <property type="evidence" value="ECO:0007669"/>
    <property type="project" value="UniProtKB-UniRule"/>
</dbReference>
<dbReference type="GO" id="GO:0008763">
    <property type="term" value="F:UDP-N-acetylmuramate-L-alanine ligase activity"/>
    <property type="evidence" value="ECO:0007669"/>
    <property type="project" value="UniProtKB-UniRule"/>
</dbReference>
<dbReference type="GO" id="GO:0051301">
    <property type="term" value="P:cell division"/>
    <property type="evidence" value="ECO:0007669"/>
    <property type="project" value="UniProtKB-KW"/>
</dbReference>
<dbReference type="GO" id="GO:0071555">
    <property type="term" value="P:cell wall organization"/>
    <property type="evidence" value="ECO:0007669"/>
    <property type="project" value="UniProtKB-KW"/>
</dbReference>
<dbReference type="GO" id="GO:0009252">
    <property type="term" value="P:peptidoglycan biosynthetic process"/>
    <property type="evidence" value="ECO:0007669"/>
    <property type="project" value="UniProtKB-UniRule"/>
</dbReference>
<dbReference type="GO" id="GO:0008360">
    <property type="term" value="P:regulation of cell shape"/>
    <property type="evidence" value="ECO:0007669"/>
    <property type="project" value="UniProtKB-KW"/>
</dbReference>
<dbReference type="FunFam" id="3.40.1190.10:FF:000001">
    <property type="entry name" value="UDP-N-acetylmuramate--L-alanine ligase"/>
    <property type="match status" value="1"/>
</dbReference>
<dbReference type="FunFam" id="3.40.50.720:FF:000046">
    <property type="entry name" value="UDP-N-acetylmuramate--L-alanine ligase"/>
    <property type="match status" value="1"/>
</dbReference>
<dbReference type="FunFam" id="3.90.190.20:FF:000001">
    <property type="entry name" value="UDP-N-acetylmuramate--L-alanine ligase"/>
    <property type="match status" value="1"/>
</dbReference>
<dbReference type="Gene3D" id="3.90.190.20">
    <property type="entry name" value="Mur ligase, C-terminal domain"/>
    <property type="match status" value="1"/>
</dbReference>
<dbReference type="Gene3D" id="3.40.1190.10">
    <property type="entry name" value="Mur-like, catalytic domain"/>
    <property type="match status" value="1"/>
</dbReference>
<dbReference type="Gene3D" id="3.40.50.720">
    <property type="entry name" value="NAD(P)-binding Rossmann-like Domain"/>
    <property type="match status" value="1"/>
</dbReference>
<dbReference type="HAMAP" id="MF_00046">
    <property type="entry name" value="MurC"/>
    <property type="match status" value="1"/>
</dbReference>
<dbReference type="InterPro" id="IPR036565">
    <property type="entry name" value="Mur-like_cat_sf"/>
</dbReference>
<dbReference type="InterPro" id="IPR004101">
    <property type="entry name" value="Mur_ligase_C"/>
</dbReference>
<dbReference type="InterPro" id="IPR036615">
    <property type="entry name" value="Mur_ligase_C_dom_sf"/>
</dbReference>
<dbReference type="InterPro" id="IPR013221">
    <property type="entry name" value="Mur_ligase_cen"/>
</dbReference>
<dbReference type="InterPro" id="IPR000713">
    <property type="entry name" value="Mur_ligase_N"/>
</dbReference>
<dbReference type="InterPro" id="IPR050061">
    <property type="entry name" value="MurCDEF_pg_biosynth"/>
</dbReference>
<dbReference type="InterPro" id="IPR005758">
    <property type="entry name" value="UDP-N-AcMur_Ala_ligase_MurC"/>
</dbReference>
<dbReference type="NCBIfam" id="TIGR01082">
    <property type="entry name" value="murC"/>
    <property type="match status" value="1"/>
</dbReference>
<dbReference type="PANTHER" id="PTHR43445:SF3">
    <property type="entry name" value="UDP-N-ACETYLMURAMATE--L-ALANINE LIGASE"/>
    <property type="match status" value="1"/>
</dbReference>
<dbReference type="PANTHER" id="PTHR43445">
    <property type="entry name" value="UDP-N-ACETYLMURAMATE--L-ALANINE LIGASE-RELATED"/>
    <property type="match status" value="1"/>
</dbReference>
<dbReference type="Pfam" id="PF01225">
    <property type="entry name" value="Mur_ligase"/>
    <property type="match status" value="1"/>
</dbReference>
<dbReference type="Pfam" id="PF02875">
    <property type="entry name" value="Mur_ligase_C"/>
    <property type="match status" value="1"/>
</dbReference>
<dbReference type="Pfam" id="PF08245">
    <property type="entry name" value="Mur_ligase_M"/>
    <property type="match status" value="1"/>
</dbReference>
<dbReference type="SUPFAM" id="SSF51984">
    <property type="entry name" value="MurCD N-terminal domain"/>
    <property type="match status" value="1"/>
</dbReference>
<dbReference type="SUPFAM" id="SSF53623">
    <property type="entry name" value="MurD-like peptide ligases, catalytic domain"/>
    <property type="match status" value="1"/>
</dbReference>
<dbReference type="SUPFAM" id="SSF53244">
    <property type="entry name" value="MurD-like peptide ligases, peptide-binding domain"/>
    <property type="match status" value="1"/>
</dbReference>